<organism>
    <name type="scientific">Homo sapiens</name>
    <name type="common">Human</name>
    <dbReference type="NCBI Taxonomy" id="9606"/>
    <lineage>
        <taxon>Eukaryota</taxon>
        <taxon>Metazoa</taxon>
        <taxon>Chordata</taxon>
        <taxon>Craniata</taxon>
        <taxon>Vertebrata</taxon>
        <taxon>Euteleostomi</taxon>
        <taxon>Mammalia</taxon>
        <taxon>Eutheria</taxon>
        <taxon>Euarchontoglires</taxon>
        <taxon>Primates</taxon>
        <taxon>Haplorrhini</taxon>
        <taxon>Catarrhini</taxon>
        <taxon>Hominidae</taxon>
        <taxon>Homo</taxon>
    </lineage>
</organism>
<protein>
    <recommendedName>
        <fullName>RanBP-type and C3HC4-type zinc finger-containing protein 1</fullName>
        <ecNumber evidence="8">2.3.2.31</ecNumber>
    </recommendedName>
    <alternativeName>
        <fullName>HBV-associated factor 4</fullName>
    </alternativeName>
    <alternativeName>
        <fullName>Heme-oxidized IRP2 ubiquitin ligase 1</fullName>
        <shortName>HOIL-1</shortName>
    </alternativeName>
    <alternativeName>
        <fullName>Hepatitis B virus X-associated protein 4</fullName>
    </alternativeName>
    <alternativeName>
        <fullName>RING finger protein 54</fullName>
    </alternativeName>
    <alternativeName>
        <fullName evidence="28">RING-type E3 ubiquitin transferase HOIL-1</fullName>
    </alternativeName>
    <alternativeName>
        <fullName evidence="24">Ubiquitin-conjugating enzyme 7-interacting protein 3</fullName>
    </alternativeName>
</protein>
<reference key="1">
    <citation type="journal article" date="1997" name="J. Biol. Chem.">
        <title>The hepatitis B virus X-associated protein, XAP3, is a protein kinase C-binding protein.</title>
        <authorList>
            <person name="Cong Y.-S."/>
            <person name="Yao Y.-L."/>
            <person name="Yang W.-M."/>
            <person name="Kuzhandaivelu N."/>
            <person name="Seto E."/>
        </authorList>
    </citation>
    <scope>NUCLEOTIDE SEQUENCE [MRNA] (ISOFORM 2)</scope>
    <scope>INTERACTION WITH PRKCH AND HEPATITIS B VIRUS/HBV PROTEIN HBX (MICROBIAL INFECTION)</scope>
</reference>
<reference key="2">
    <citation type="journal article" date="2003" name="Nat. Cell Biol.">
        <title>Identification of the ubiquitin-protein ligase that recognizes oxidized IRP2.</title>
        <authorList>
            <person name="Yamanaka K."/>
            <person name="Ishikawa H."/>
            <person name="Megumi Y."/>
            <person name="Tokunaga F."/>
            <person name="Kanie M."/>
            <person name="Rouault T.A."/>
            <person name="Morishima I."/>
            <person name="Minato N."/>
            <person name="Ishimori K."/>
            <person name="Iwai K."/>
        </authorList>
    </citation>
    <scope>NUCLEOTIDE SEQUENCE [MRNA] (ISOFORM 2)</scope>
    <scope>FUNCTION</scope>
    <scope>CATALYTIC ACTIVITY</scope>
    <scope>PATHWAY</scope>
    <scope>INTERACTION WITH IREB2</scope>
    <scope>MUTAGENESIS OF CYS-282 AND CYS-285</scope>
    <source>
        <tissue>Kidney adenocarcinoma</tissue>
    </source>
</reference>
<reference key="3">
    <citation type="journal article" date="2001" name="Nature">
        <title>The DNA sequence and comparative analysis of human chromosome 20.</title>
        <authorList>
            <person name="Deloukas P."/>
            <person name="Matthews L.H."/>
            <person name="Ashurst J.L."/>
            <person name="Burton J."/>
            <person name="Gilbert J.G.R."/>
            <person name="Jones M."/>
            <person name="Stavrides G."/>
            <person name="Almeida J.P."/>
            <person name="Babbage A.K."/>
            <person name="Bagguley C.L."/>
            <person name="Bailey J."/>
            <person name="Barlow K.F."/>
            <person name="Bates K.N."/>
            <person name="Beard L.M."/>
            <person name="Beare D.M."/>
            <person name="Beasley O.P."/>
            <person name="Bird C.P."/>
            <person name="Blakey S.E."/>
            <person name="Bridgeman A.M."/>
            <person name="Brown A.J."/>
            <person name="Buck D."/>
            <person name="Burrill W.D."/>
            <person name="Butler A.P."/>
            <person name="Carder C."/>
            <person name="Carter N.P."/>
            <person name="Chapman J.C."/>
            <person name="Clamp M."/>
            <person name="Clark G."/>
            <person name="Clark L.N."/>
            <person name="Clark S.Y."/>
            <person name="Clee C.M."/>
            <person name="Clegg S."/>
            <person name="Cobley V.E."/>
            <person name="Collier R.E."/>
            <person name="Connor R.E."/>
            <person name="Corby N.R."/>
            <person name="Coulson A."/>
            <person name="Coville G.J."/>
            <person name="Deadman R."/>
            <person name="Dhami P.D."/>
            <person name="Dunn M."/>
            <person name="Ellington A.G."/>
            <person name="Frankland J.A."/>
            <person name="Fraser A."/>
            <person name="French L."/>
            <person name="Garner P."/>
            <person name="Grafham D.V."/>
            <person name="Griffiths C."/>
            <person name="Griffiths M.N.D."/>
            <person name="Gwilliam R."/>
            <person name="Hall R.E."/>
            <person name="Hammond S."/>
            <person name="Harley J.L."/>
            <person name="Heath P.D."/>
            <person name="Ho S."/>
            <person name="Holden J.L."/>
            <person name="Howden P.J."/>
            <person name="Huckle E."/>
            <person name="Hunt A.R."/>
            <person name="Hunt S.E."/>
            <person name="Jekosch K."/>
            <person name="Johnson C.M."/>
            <person name="Johnson D."/>
            <person name="Kay M.P."/>
            <person name="Kimberley A.M."/>
            <person name="King A."/>
            <person name="Knights A."/>
            <person name="Laird G.K."/>
            <person name="Lawlor S."/>
            <person name="Lehvaeslaiho M.H."/>
            <person name="Leversha M.A."/>
            <person name="Lloyd C."/>
            <person name="Lloyd D.M."/>
            <person name="Lovell J.D."/>
            <person name="Marsh V.L."/>
            <person name="Martin S.L."/>
            <person name="McConnachie L.J."/>
            <person name="McLay K."/>
            <person name="McMurray A.A."/>
            <person name="Milne S.A."/>
            <person name="Mistry D."/>
            <person name="Moore M.J.F."/>
            <person name="Mullikin J.C."/>
            <person name="Nickerson T."/>
            <person name="Oliver K."/>
            <person name="Parker A."/>
            <person name="Patel R."/>
            <person name="Pearce T.A.V."/>
            <person name="Peck A.I."/>
            <person name="Phillimore B.J.C.T."/>
            <person name="Prathalingam S.R."/>
            <person name="Plumb R.W."/>
            <person name="Ramsay H."/>
            <person name="Rice C.M."/>
            <person name="Ross M.T."/>
            <person name="Scott C.E."/>
            <person name="Sehra H.K."/>
            <person name="Shownkeen R."/>
            <person name="Sims S."/>
            <person name="Skuce C.D."/>
            <person name="Smith M.L."/>
            <person name="Soderlund C."/>
            <person name="Steward C.A."/>
            <person name="Sulston J.E."/>
            <person name="Swann R.M."/>
            <person name="Sycamore N."/>
            <person name="Taylor R."/>
            <person name="Tee L."/>
            <person name="Thomas D.W."/>
            <person name="Thorpe A."/>
            <person name="Tracey A."/>
            <person name="Tromans A.C."/>
            <person name="Vaudin M."/>
            <person name="Wall M."/>
            <person name="Wallis J.M."/>
            <person name="Whitehead S.L."/>
            <person name="Whittaker P."/>
            <person name="Willey D.L."/>
            <person name="Williams L."/>
            <person name="Williams S.A."/>
            <person name="Wilming L."/>
            <person name="Wray P.W."/>
            <person name="Hubbard T."/>
            <person name="Durbin R.M."/>
            <person name="Bentley D.R."/>
            <person name="Beck S."/>
            <person name="Rogers J."/>
        </authorList>
    </citation>
    <scope>NUCLEOTIDE SEQUENCE [LARGE SCALE GENOMIC DNA]</scope>
</reference>
<reference key="4">
    <citation type="journal article" date="2004" name="Genome Res.">
        <title>The status, quality, and expansion of the NIH full-length cDNA project: the Mammalian Gene Collection (MGC).</title>
        <authorList>
            <consortium name="The MGC Project Team"/>
        </authorList>
    </citation>
    <scope>NUCLEOTIDE SEQUENCE [LARGE SCALE MRNA] (ISOFORMS 1 AND 3)</scope>
    <source>
        <tissue>Lung</tissue>
        <tissue>Placenta</tissue>
    </source>
</reference>
<reference key="5">
    <citation type="journal article" date="2004" name="Genome Biol.">
        <title>An unappreciated role for RNA surveillance.</title>
        <authorList>
            <person name="Hillman R.T."/>
            <person name="Green R.E."/>
            <person name="Brenner S.E."/>
        </authorList>
    </citation>
    <scope>SPLICE ISOFORM(S) THAT ARE POTENTIAL NMD TARGET(S)</scope>
</reference>
<reference key="6">
    <citation type="journal article" date="2005" name="Mol. Cell. Proteomics">
        <title>Time-resolved mass spectrometry of tyrosine phosphorylation sites in the epidermal growth factor receptor signaling network reveals dynamic modules.</title>
        <authorList>
            <person name="Zhang Y."/>
            <person name="Wolf-Yadlin A."/>
            <person name="Ross P.L."/>
            <person name="Pappin D.J."/>
            <person name="Rush J."/>
            <person name="Lauffenburger D.A."/>
            <person name="White F.M."/>
        </authorList>
    </citation>
    <scope>PHOSPHORYLATION [LARGE SCALE ANALYSIS] AT TYR-330</scope>
    <scope>IDENTIFICATION BY MASS SPECTROMETRY [LARGE SCALE ANALYSIS]</scope>
    <source>
        <tissue>Mammary epithelium</tissue>
    </source>
</reference>
<reference key="7">
    <citation type="journal article" date="2006" name="EMBO J.">
        <title>A ubiquitin ligase complex assembles linear polyubiquitin chains.</title>
        <authorList>
            <person name="Kirisako T."/>
            <person name="Kamei K."/>
            <person name="Murata S."/>
            <person name="Kato M."/>
            <person name="Fukumoto H."/>
            <person name="Kanie M."/>
            <person name="Sano S."/>
            <person name="Tokunaga F."/>
            <person name="Tanaka K."/>
            <person name="Iwai K."/>
        </authorList>
    </citation>
    <scope>IDENTIFICATION IN THE LUBAC COMPLEX</scope>
    <scope>FUNCTION OF THE LUBAC COMPLEX</scope>
</reference>
<reference key="8">
    <citation type="journal article" date="2007" name="J. Biol. Chem.">
        <title>RBCK1 negatively regulates tumor necrosis factor- and interleukin-1-triggered NF-kappaB activation by targeting TAB2/3 for degradation.</title>
        <authorList>
            <person name="Tian Y."/>
            <person name="Zhang Y."/>
            <person name="Zhong B."/>
            <person name="Wang Y.Y."/>
            <person name="Diao F.C."/>
            <person name="Wang R.P."/>
            <person name="Zhang M."/>
            <person name="Chen D.Y."/>
            <person name="Zhai Z.H."/>
            <person name="Shu H.B."/>
        </authorList>
    </citation>
    <scope>FUNCTION</scope>
    <scope>INTERACTION WITH TAB2; TAB3; MAP3K7; TRAF6 AND RIPK1</scope>
</reference>
<reference key="9">
    <citation type="journal article" date="2008" name="Cell Res.">
        <title>Negative feedback regulation of cellular antiviral signaling by RBCK1-mediated degradation of IRF3.</title>
        <authorList>
            <person name="Zhang M."/>
            <person name="Tian Y."/>
            <person name="Wang R.P."/>
            <person name="Gao D."/>
            <person name="Zhang Y."/>
            <person name="Diao F.C."/>
            <person name="Chen D.Y."/>
            <person name="Zhai Z.H."/>
            <person name="Shu H.B."/>
        </authorList>
    </citation>
    <scope>FUNCTION</scope>
    <scope>INDUCTION</scope>
    <scope>INTERACTION WITH IRF3</scope>
</reference>
<reference key="10">
    <citation type="journal article" date="2009" name="Mol. Cell">
        <title>Recruitment of the linear ubiquitin chain assembly complex stabilizes the TNF-R1 signaling complex and is required for TNF-mediated gene induction.</title>
        <authorList>
            <person name="Haas T.L."/>
            <person name="Emmerich C.H."/>
            <person name="Gerlach B."/>
            <person name="Schmukle A.C."/>
            <person name="Cordier S.M."/>
            <person name="Rieser E."/>
            <person name="Feltham R."/>
            <person name="Vince J."/>
            <person name="Warnken U."/>
            <person name="Wenger T."/>
            <person name="Koschny R."/>
            <person name="Komander D."/>
            <person name="Silke J."/>
            <person name="Walczak H."/>
        </authorList>
    </citation>
    <scope>POLYUBIQUITIN-BINDING</scope>
    <scope>FUNCTION OF THE LUBAC COMPLEX</scope>
    <scope>ASSOCIATION WITH TNF-RSC</scope>
    <scope>IDENTIFICATION BY MASS SPECTROMETRY</scope>
</reference>
<reference key="11">
    <citation type="journal article" date="2009" name="Nat. Cell Biol.">
        <title>Involvement of linear polyubiquitylation of NEMO in NF-kappaB activation.</title>
        <authorList>
            <person name="Tokunaga F."/>
            <person name="Sakata S."/>
            <person name="Saeki Y."/>
            <person name="Satomi Y."/>
            <person name="Kirisako T."/>
            <person name="Kamei K."/>
            <person name="Nakagawa T."/>
            <person name="Kato M."/>
            <person name="Murata S."/>
            <person name="Yamaoka S."/>
            <person name="Yamamoto M."/>
            <person name="Akira S."/>
            <person name="Takao T."/>
            <person name="Tanaka K."/>
            <person name="Iwai K."/>
        </authorList>
    </citation>
    <scope>FUNCTION OF THE LUBAC COMPLEX</scope>
</reference>
<reference key="12">
    <citation type="journal article" date="2011" name="Nature">
        <title>Linear ubiquitination prevents inflammation and regulates immune signalling.</title>
        <authorList>
            <person name="Gerlach B."/>
            <person name="Cordier S.M."/>
            <person name="Schmukle A.C."/>
            <person name="Emmerich C.H."/>
            <person name="Rieser E."/>
            <person name="Haas T.L."/>
            <person name="Webb A.I."/>
            <person name="Rickard J.A."/>
            <person name="Anderton H."/>
            <person name="Wong W.W."/>
            <person name="Nachbur U."/>
            <person name="Gangoda L."/>
            <person name="Warnken U."/>
            <person name="Purcell A.W."/>
            <person name="Silke J."/>
            <person name="Walczak H."/>
        </authorList>
    </citation>
    <scope>IDENTIFICATION IN THE LUBAC COMPLEX</scope>
    <scope>FUNCTION</scope>
</reference>
<reference key="13">
    <citation type="journal article" date="2011" name="Nature">
        <title>SHARPIN is a component of the NF-kappaB-activating linear ubiquitin chain assembly complex.</title>
        <authorList>
            <person name="Tokunaga F."/>
            <person name="Nakagawa T."/>
            <person name="Nakahara M."/>
            <person name="Saeki Y."/>
            <person name="Taniguchi M."/>
            <person name="Sakata S."/>
            <person name="Tanaka K."/>
            <person name="Nakano H."/>
            <person name="Iwai K."/>
        </authorList>
    </citation>
    <scope>IDENTIFICATION IN THE LUBAC COMPLEX</scope>
    <scope>FUNCTION</scope>
</reference>
<reference key="14">
    <citation type="journal article" date="2011" name="Nature">
        <title>SHARPIN forms a linear ubiquitin ligase complex regulating NF-kappaB activity and apoptosis.</title>
        <authorList>
            <person name="Ikeda F."/>
            <person name="Deribe Y.L."/>
            <person name="Skanland S.S."/>
            <person name="Stieglitz B."/>
            <person name="Grabbe C."/>
            <person name="Franz-Wachtel M."/>
            <person name="van Wijk S.J."/>
            <person name="Goswami P."/>
            <person name="Nagy V."/>
            <person name="Terzic J."/>
            <person name="Tokunaga F."/>
            <person name="Androulidaki A."/>
            <person name="Nakagawa T."/>
            <person name="Pasparakis M."/>
            <person name="Iwai K."/>
            <person name="Sundberg J.P."/>
            <person name="Schaefer L."/>
            <person name="Rittinger K."/>
            <person name="Macek B."/>
            <person name="Dikic I."/>
        </authorList>
    </citation>
    <scope>IDENTIFICATION IN THE LUBAC COMPLEX</scope>
    <scope>FUNCTION</scope>
    <scope>DOMAIN RANBP2-TYPE</scope>
    <scope>UBIQUITIN-BINDING</scope>
</reference>
<reference key="15">
    <citation type="journal article" date="2012" name="Nat. Immunol.">
        <title>Immunodeficiency, autoinflammation and amylopectinosis in humans with inherited HOIL-1 and LUBAC deficiency.</title>
        <authorList>
            <person name="Boisson B."/>
            <person name="Laplantine E."/>
            <person name="Prando C."/>
            <person name="Giliani S."/>
            <person name="Israelsson E."/>
            <person name="Xu Z."/>
            <person name="Abhyankar A."/>
            <person name="Israel L."/>
            <person name="Trevejo-Nunez G."/>
            <person name="Bogunovic D."/>
            <person name="Cepika A.M."/>
            <person name="MacDuff D."/>
            <person name="Chrabieh M."/>
            <person name="Hubeau M."/>
            <person name="Bajolle F."/>
            <person name="Debre M."/>
            <person name="Mazzolari E."/>
            <person name="Vairo D."/>
            <person name="Agou F."/>
            <person name="Virgin H.W."/>
            <person name="Bossuyt X."/>
            <person name="Rambaud C."/>
            <person name="Facchetti F."/>
            <person name="Bonnet D."/>
            <person name="Quartier P."/>
            <person name="Fournet J.C."/>
            <person name="Pascual V."/>
            <person name="Chaussabel D."/>
            <person name="Notarangelo L.D."/>
            <person name="Puel A."/>
            <person name="Israel A."/>
            <person name="Casanova J.L."/>
            <person name="Picard C."/>
        </authorList>
    </citation>
    <scope>INVOLVEMENT IN PGBM1</scope>
</reference>
<reference key="16">
    <citation type="journal article" date="2012" name="Proc. Natl. Acad. Sci. U.S.A.">
        <title>N-terminal acetylome analyses and functional insights of the N-terminal acetyltransferase NatB.</title>
        <authorList>
            <person name="Van Damme P."/>
            <person name="Lasa M."/>
            <person name="Polevoda B."/>
            <person name="Gazquez C."/>
            <person name="Elosegui-Artola A."/>
            <person name="Kim D.S."/>
            <person name="De Juan-Pardo E."/>
            <person name="Demeyer K."/>
            <person name="Hole K."/>
            <person name="Larrea E."/>
            <person name="Timmerman E."/>
            <person name="Prieto J."/>
            <person name="Arnesen T."/>
            <person name="Sherman F."/>
            <person name="Gevaert K."/>
            <person name="Aldabe R."/>
        </authorList>
    </citation>
    <scope>ACETYLATION [LARGE SCALE ANALYSIS] AT MET-1</scope>
    <scope>IDENTIFICATION BY MASS SPECTROMETRY [LARGE SCALE ANALYSIS]</scope>
</reference>
<reference key="17">
    <citation type="journal article" date="2013" name="Ann. Neurol.">
        <title>Polyglucosan body myopathy caused by defective ubiquitin ligase RBCK1.</title>
        <authorList>
            <person name="Nilsson J."/>
            <person name="Schoser B."/>
            <person name="Laforet P."/>
            <person name="Kalev O."/>
            <person name="Lindberg C."/>
            <person name="Romero N.B."/>
            <person name="Davila Lopez M."/>
            <person name="Akman H.O."/>
            <person name="Wahbi K."/>
            <person name="Iglseder S."/>
            <person name="Eggers C."/>
            <person name="Engel A.G."/>
            <person name="Dimauro S."/>
            <person name="Oldfors A."/>
        </authorList>
    </citation>
    <scope>INVOLVEMENT IN PGBM1</scope>
    <scope>VARIANTS PGBM1 PRO-18 AND SER-387</scope>
</reference>
<reference key="18">
    <citation type="journal article" date="2013" name="J. Proteome Res.">
        <title>Toward a comprehensive characterization of a human cancer cell phosphoproteome.</title>
        <authorList>
            <person name="Zhou H."/>
            <person name="Di Palma S."/>
            <person name="Preisinger C."/>
            <person name="Peng M."/>
            <person name="Polat A.N."/>
            <person name="Heck A.J."/>
            <person name="Mohammed S."/>
        </authorList>
    </citation>
    <scope>PHOSPHORYLATION [LARGE SCALE ANALYSIS] AT SER-50</scope>
    <scope>IDENTIFICATION BY MASS SPECTROMETRY [LARGE SCALE ANALYSIS]</scope>
    <source>
        <tissue>Cervix carcinoma</tissue>
    </source>
</reference>
<reference key="19">
    <citation type="journal article" date="2013" name="Nature">
        <title>The linear ubiquitin-specific deubiquitinase gumby regulates angiogenesis.</title>
        <authorList>
            <person name="Rivkin E."/>
            <person name="Almeida S.M."/>
            <person name="Ceccarelli D.F."/>
            <person name="Juang Y.C."/>
            <person name="Maclean T.A."/>
            <person name="Srikumar T."/>
            <person name="Huang H."/>
            <person name="Dunham W.H."/>
            <person name="Fukumura R."/>
            <person name="Xie G."/>
            <person name="Gondo Y."/>
            <person name="Raught B."/>
            <person name="Gingras A.C."/>
            <person name="Sicheri F."/>
            <person name="Cordes S.P."/>
        </authorList>
    </citation>
    <scope>FUNCTION</scope>
</reference>
<reference key="20">
    <citation type="journal article" date="2016" name="Nat. Microbiol.">
        <title>Shigella flexneri suppresses NF-kappaB activation by inhibiting linear ubiquitin chain ligation.</title>
        <authorList>
            <person name="de Jong M.F."/>
            <person name="Liu Z."/>
            <person name="Chen D."/>
            <person name="Alto N.M."/>
        </authorList>
    </citation>
    <scope>INTERACTION WITH S.FLEXNERI IPAH1.4 AND IPAH2.5 (MICROBIAL INFECTION)</scope>
</reference>
<reference key="21">
    <citation type="journal article" date="2017" name="Nat. Microbiol.">
        <title>LUBAC-synthesized linear ubiquitin chains restrict cytosol-invading bacteria by activating autophagy and NF-kappaB.</title>
        <authorList>
            <person name="Noad J."/>
            <person name="von der Malsburg A."/>
            <person name="Pathe C."/>
            <person name="Michel M.A."/>
            <person name="Komander D."/>
            <person name="Randow F."/>
        </authorList>
    </citation>
    <scope>FUNCTION</scope>
    <scope>IDENTIFICATION IN THE LUBAC COMPLEX</scope>
    <scope>PATHWAY</scope>
</reference>
<reference key="22">
    <citation type="journal article" date="2022" name="Proc. Natl. Acad. Sci. U.S.A.">
        <title>Mechanistic insights into the subversion of the linear ubiquitin chain assembly complex by the E3 ligase IpaH1.4 of Shigella flexneri.</title>
        <authorList>
            <person name="Liu J."/>
            <person name="Wang Y."/>
            <person name="Wang D."/>
            <person name="Wang Y."/>
            <person name="Xu X."/>
            <person name="Zhang Y."/>
            <person name="Li Y."/>
            <person name="Zhang M."/>
            <person name="Gong X."/>
            <person name="Tang Y."/>
            <person name="Shen L."/>
            <person name="Li M."/>
            <person name="Pan L."/>
        </authorList>
    </citation>
    <scope>UBIQUITINATION (MICROBIAL INFECTION)</scope>
</reference>
<reference key="23">
    <citation type="submission" date="2005-11" db="PDB data bank">
        <title>Solution structure of the ZF-RANBP domain of the protein HBV associated factor.</title>
        <authorList>
            <consortium name="RIKEN structural genomics initiative (RSGI)"/>
        </authorList>
    </citation>
    <scope>STRUCTURE BY NMR OF 194-232</scope>
</reference>
<reference key="24">
    <citation type="journal article" date="2012" name="EMBO Rep.">
        <title>A non-canonical UBA-UBL interaction forms the linear-ubiquitin-chain assembly complex.</title>
        <authorList>
            <person name="Yagi H."/>
            <person name="Ishimoto K."/>
            <person name="Hiromoto T."/>
            <person name="Fujita H."/>
            <person name="Mizushima T."/>
            <person name="Uekusa Y."/>
            <person name="Yagi-Utsumi M."/>
            <person name="Kurimoto E."/>
            <person name="Noda M."/>
            <person name="Uchiyama S."/>
            <person name="Tokunaga F."/>
            <person name="Iwai K."/>
            <person name="Kato K."/>
        </authorList>
    </citation>
    <scope>X-RAY CRYSTALLOGRAPHY (2.71 ANGSTROMS) OF 37-137</scope>
    <scope>INTERACTION WITH RNF31</scope>
</reference>
<reference key="25">
    <citation type="journal article" date="2012" name="Protein Sci.">
        <title>Solution structure of the E3 ligase HOIL-1 Ubl domain.</title>
        <authorList>
            <person name="Beasley S.A."/>
            <person name="Safadi S.S."/>
            <person name="Barber K.R."/>
            <person name="Shaw G.S."/>
        </authorList>
    </citation>
    <scope>STRUCTURE BY NMR OF 51-139</scope>
</reference>
<dbReference type="EC" id="2.3.2.31" evidence="8"/>
<dbReference type="EMBL" id="U67322">
    <property type="protein sequence ID" value="AAD00162.1"/>
    <property type="molecule type" value="mRNA"/>
</dbReference>
<dbReference type="EMBL" id="AB107766">
    <property type="protein sequence ID" value="BAC75409.1"/>
    <property type="molecule type" value="mRNA"/>
</dbReference>
<dbReference type="EMBL" id="AL121747">
    <property type="status" value="NOT_ANNOTATED_CDS"/>
    <property type="molecule type" value="Genomic_DNA"/>
</dbReference>
<dbReference type="EMBL" id="BC000983">
    <property type="status" value="NOT_ANNOTATED_CDS"/>
    <property type="molecule type" value="mRNA"/>
</dbReference>
<dbReference type="EMBL" id="BC015219">
    <property type="protein sequence ID" value="AAH15219.2"/>
    <property type="status" value="ALT_INIT"/>
    <property type="molecule type" value="mRNA"/>
</dbReference>
<dbReference type="CCDS" id="CCDS12998.1">
    <molecule id="Q9BYM8-3"/>
</dbReference>
<dbReference type="CCDS" id="CCDS13000.2">
    <molecule id="Q9BYM8-1"/>
</dbReference>
<dbReference type="RefSeq" id="NP_006453.1">
    <molecule id="Q9BYM8-3"/>
    <property type="nucleotide sequence ID" value="NM_006462.6"/>
</dbReference>
<dbReference type="RefSeq" id="NP_112506.2">
    <molecule id="Q9BYM8-1"/>
    <property type="nucleotide sequence ID" value="NM_031229.4"/>
</dbReference>
<dbReference type="PDB" id="2CRC">
    <property type="method" value="NMR"/>
    <property type="chains" value="A=194-232"/>
</dbReference>
<dbReference type="PDB" id="2LGY">
    <property type="method" value="NMR"/>
    <property type="chains" value="A=51-139"/>
</dbReference>
<dbReference type="PDB" id="4DBG">
    <property type="method" value="X-ray"/>
    <property type="resolution" value="2.71 A"/>
    <property type="chains" value="A=37-137"/>
</dbReference>
<dbReference type="PDB" id="7V8E">
    <property type="method" value="X-ray"/>
    <property type="resolution" value="1.90 A"/>
    <property type="chains" value="C/D=53-135"/>
</dbReference>
<dbReference type="PDB" id="7YUI">
    <property type="method" value="X-ray"/>
    <property type="resolution" value="2.60 A"/>
    <property type="chains" value="B=195-424"/>
</dbReference>
<dbReference type="PDB" id="7YUJ">
    <property type="method" value="X-ray"/>
    <property type="resolution" value="1.86 A"/>
    <property type="chains" value="A/B=365-510"/>
</dbReference>
<dbReference type="PDB" id="8BVL">
    <property type="method" value="X-ray"/>
    <property type="resolution" value="2.24 A"/>
    <property type="chains" value="A/B=368-510"/>
</dbReference>
<dbReference type="PDB" id="8EAZ">
    <property type="method" value="X-ray"/>
    <property type="resolution" value="3.08 A"/>
    <property type="chains" value="A/B=232-510"/>
</dbReference>
<dbReference type="PDB" id="8K6Q">
    <property type="method" value="X-ray"/>
    <property type="resolution" value="1.59 A"/>
    <property type="chains" value="A/B/C/D=1-51"/>
</dbReference>
<dbReference type="PDB" id="9EGV">
    <property type="method" value="X-ray"/>
    <property type="resolution" value="2.00 A"/>
    <property type="chains" value="A/B=412-510"/>
</dbReference>
<dbReference type="PDB" id="9EGW">
    <property type="method" value="X-ray"/>
    <property type="resolution" value="1.78 A"/>
    <property type="chains" value="A/B=412-510"/>
</dbReference>
<dbReference type="PDBsum" id="2CRC"/>
<dbReference type="PDBsum" id="2LGY"/>
<dbReference type="PDBsum" id="4DBG"/>
<dbReference type="PDBsum" id="7V8E"/>
<dbReference type="PDBsum" id="7YUI"/>
<dbReference type="PDBsum" id="7YUJ"/>
<dbReference type="PDBsum" id="8BVL"/>
<dbReference type="PDBsum" id="8EAZ"/>
<dbReference type="PDBsum" id="8K6Q"/>
<dbReference type="PDBsum" id="9EGV"/>
<dbReference type="PDBsum" id="9EGW"/>
<dbReference type="BMRB" id="Q9BYM8"/>
<dbReference type="EMDB" id="EMD-11054"/>
<dbReference type="SMR" id="Q9BYM8"/>
<dbReference type="BioGRID" id="115862">
    <property type="interactions" value="574"/>
</dbReference>
<dbReference type="ComplexPortal" id="CPX-1877">
    <property type="entry name" value="LUBAC ubiquitin ligase complex"/>
</dbReference>
<dbReference type="CORUM" id="Q9BYM8"/>
<dbReference type="DIP" id="DIP-47737N"/>
<dbReference type="FunCoup" id="Q9BYM8">
    <property type="interactions" value="857"/>
</dbReference>
<dbReference type="IntAct" id="Q9BYM8">
    <property type="interactions" value="99"/>
</dbReference>
<dbReference type="MINT" id="Q9BYM8"/>
<dbReference type="STRING" id="9606.ENSP00000348632"/>
<dbReference type="BindingDB" id="Q9BYM8"/>
<dbReference type="ChEMBL" id="CHEMBL4296109"/>
<dbReference type="GlyGen" id="Q9BYM8">
    <property type="glycosylation" value="1 site, 1 O-linked glycan (1 site)"/>
</dbReference>
<dbReference type="iPTMnet" id="Q9BYM8"/>
<dbReference type="MetOSite" id="Q9BYM8"/>
<dbReference type="PhosphoSitePlus" id="Q9BYM8"/>
<dbReference type="BioMuta" id="RBCK1"/>
<dbReference type="DMDM" id="166214993"/>
<dbReference type="jPOST" id="Q9BYM8"/>
<dbReference type="MassIVE" id="Q9BYM8"/>
<dbReference type="PaxDb" id="9606-ENSP00000348632"/>
<dbReference type="PeptideAtlas" id="Q9BYM8"/>
<dbReference type="ProteomicsDB" id="79667">
    <molecule id="Q9BYM8-1"/>
</dbReference>
<dbReference type="ProteomicsDB" id="79668">
    <molecule id="Q9BYM8-3"/>
</dbReference>
<dbReference type="ProteomicsDB" id="79669">
    <molecule id="Q9BYM8-4"/>
</dbReference>
<dbReference type="Pumba" id="Q9BYM8"/>
<dbReference type="Antibodypedia" id="6164">
    <property type="antibodies" value="295 antibodies from 29 providers"/>
</dbReference>
<dbReference type="DNASU" id="10616"/>
<dbReference type="Ensembl" id="ENST00000353660.7">
    <molecule id="Q9BYM8-3"/>
    <property type="protein sequence ID" value="ENSP00000254960.5"/>
    <property type="gene ID" value="ENSG00000125826.22"/>
</dbReference>
<dbReference type="Ensembl" id="ENST00000356286.10">
    <molecule id="Q9BYM8-1"/>
    <property type="protein sequence ID" value="ENSP00000348632.6"/>
    <property type="gene ID" value="ENSG00000125826.22"/>
</dbReference>
<dbReference type="Ensembl" id="ENST00000382181.2">
    <molecule id="Q9BYM8-4"/>
    <property type="protein sequence ID" value="ENSP00000371616.3"/>
    <property type="gene ID" value="ENSG00000125826.22"/>
</dbReference>
<dbReference type="GeneID" id="10616"/>
<dbReference type="KEGG" id="hsa:10616"/>
<dbReference type="MANE-Select" id="ENST00000356286.10">
    <property type="protein sequence ID" value="ENSP00000348632.6"/>
    <property type="RefSeq nucleotide sequence ID" value="NM_031229.4"/>
    <property type="RefSeq protein sequence ID" value="NP_112506.2"/>
</dbReference>
<dbReference type="UCSC" id="uc002wdp.5">
    <molecule id="Q9BYM8-1"/>
    <property type="organism name" value="human"/>
</dbReference>
<dbReference type="AGR" id="HGNC:15864"/>
<dbReference type="CTD" id="10616"/>
<dbReference type="DisGeNET" id="10616"/>
<dbReference type="GeneCards" id="RBCK1"/>
<dbReference type="HGNC" id="HGNC:15864">
    <property type="gene designation" value="RBCK1"/>
</dbReference>
<dbReference type="HPA" id="ENSG00000125826">
    <property type="expression patterns" value="Low tissue specificity"/>
</dbReference>
<dbReference type="MalaCards" id="RBCK1"/>
<dbReference type="MIM" id="610924">
    <property type="type" value="gene"/>
</dbReference>
<dbReference type="MIM" id="615895">
    <property type="type" value="phenotype"/>
</dbReference>
<dbReference type="neXtProt" id="NX_Q9BYM8"/>
<dbReference type="NIAGADS" id="ENSG00000125826"/>
<dbReference type="OpenTargets" id="ENSG00000125826"/>
<dbReference type="Orphanet" id="329173">
    <property type="disease" value="Autoinflammatory syndrome with pyogenic bacterial infection and amylopectinosis"/>
</dbReference>
<dbReference type="Orphanet" id="397937">
    <property type="disease" value="Polyglucosan body myopathy type 1"/>
</dbReference>
<dbReference type="PharmGKB" id="PA25723"/>
<dbReference type="VEuPathDB" id="HostDB:ENSG00000125826"/>
<dbReference type="eggNOG" id="KOG1815">
    <property type="taxonomic scope" value="Eukaryota"/>
</dbReference>
<dbReference type="GeneTree" id="ENSGT00940000161130"/>
<dbReference type="HOGENOM" id="CLU_014998_1_0_1"/>
<dbReference type="InParanoid" id="Q9BYM8"/>
<dbReference type="OMA" id="CRCRMNG"/>
<dbReference type="OrthoDB" id="261960at2759"/>
<dbReference type="PAN-GO" id="Q9BYM8">
    <property type="GO annotations" value="6 GO annotations based on evolutionary models"/>
</dbReference>
<dbReference type="PhylomeDB" id="Q9BYM8"/>
<dbReference type="TreeFam" id="TF323486"/>
<dbReference type="PathwayCommons" id="Q9BYM8"/>
<dbReference type="Reactome" id="R-HSA-5357786">
    <property type="pathway name" value="TNFR1-induced proapoptotic signaling"/>
</dbReference>
<dbReference type="Reactome" id="R-HSA-5357905">
    <property type="pathway name" value="Regulation of TNFR1 signaling"/>
</dbReference>
<dbReference type="Reactome" id="R-HSA-5357956">
    <property type="pathway name" value="TNFR1-induced NF-kappa-B signaling pathway"/>
</dbReference>
<dbReference type="Reactome" id="R-HSA-983168">
    <property type="pathway name" value="Antigen processing: Ubiquitination &amp; Proteasome degradation"/>
</dbReference>
<dbReference type="SignaLink" id="Q9BYM8"/>
<dbReference type="SIGNOR" id="Q9BYM8"/>
<dbReference type="UniPathway" id="UPA00143"/>
<dbReference type="BioGRID-ORCS" id="10616">
    <property type="hits" value="22 hits in 1194 CRISPR screens"/>
</dbReference>
<dbReference type="ChiTaRS" id="RBCK1">
    <property type="organism name" value="human"/>
</dbReference>
<dbReference type="EvolutionaryTrace" id="Q9BYM8"/>
<dbReference type="GeneWiki" id="RBCK1"/>
<dbReference type="GenomeRNAi" id="10616"/>
<dbReference type="Pharos" id="Q9BYM8">
    <property type="development level" value="Tbio"/>
</dbReference>
<dbReference type="PRO" id="PR:Q9BYM8"/>
<dbReference type="Proteomes" id="UP000005640">
    <property type="component" value="Chromosome 20"/>
</dbReference>
<dbReference type="RNAct" id="Q9BYM8">
    <property type="molecule type" value="protein"/>
</dbReference>
<dbReference type="Bgee" id="ENSG00000125826">
    <property type="expression patterns" value="Expressed in right hemisphere of cerebellum and 199 other cell types or tissues"/>
</dbReference>
<dbReference type="ExpressionAtlas" id="Q9BYM8">
    <property type="expression patterns" value="baseline and differential"/>
</dbReference>
<dbReference type="GO" id="GO:0005829">
    <property type="term" value="C:cytosol"/>
    <property type="evidence" value="ECO:0000304"/>
    <property type="project" value="Reactome"/>
</dbReference>
<dbReference type="GO" id="GO:0071797">
    <property type="term" value="C:LUBAC complex"/>
    <property type="evidence" value="ECO:0000314"/>
    <property type="project" value="UniProtKB"/>
</dbReference>
<dbReference type="GO" id="GO:0042802">
    <property type="term" value="F:identical protein binding"/>
    <property type="evidence" value="ECO:0000353"/>
    <property type="project" value="IntAct"/>
</dbReference>
<dbReference type="GO" id="GO:0140311">
    <property type="term" value="F:protein sequestering activity"/>
    <property type="evidence" value="ECO:0000314"/>
    <property type="project" value="GO_Central"/>
</dbReference>
<dbReference type="GO" id="GO:0003713">
    <property type="term" value="F:transcription coactivator activity"/>
    <property type="evidence" value="ECO:0000314"/>
    <property type="project" value="GO_Central"/>
</dbReference>
<dbReference type="GO" id="GO:0043130">
    <property type="term" value="F:ubiquitin binding"/>
    <property type="evidence" value="ECO:0000314"/>
    <property type="project" value="UniProtKB"/>
</dbReference>
<dbReference type="GO" id="GO:1990757">
    <property type="term" value="F:ubiquitin ligase activator activity"/>
    <property type="evidence" value="ECO:0007669"/>
    <property type="project" value="Ensembl"/>
</dbReference>
<dbReference type="GO" id="GO:0004842">
    <property type="term" value="F:ubiquitin-protein transferase activity"/>
    <property type="evidence" value="ECO:0000314"/>
    <property type="project" value="UniProtKB"/>
</dbReference>
<dbReference type="GO" id="GO:0008270">
    <property type="term" value="F:zinc ion binding"/>
    <property type="evidence" value="ECO:0007669"/>
    <property type="project" value="UniProtKB-KW"/>
</dbReference>
<dbReference type="GO" id="GO:0042742">
    <property type="term" value="P:defense response to bacterium"/>
    <property type="evidence" value="ECO:0000315"/>
    <property type="project" value="UniProtKB"/>
</dbReference>
<dbReference type="GO" id="GO:0060546">
    <property type="term" value="P:negative regulation of necroptotic process"/>
    <property type="evidence" value="ECO:0007669"/>
    <property type="project" value="Ensembl"/>
</dbReference>
<dbReference type="GO" id="GO:0032088">
    <property type="term" value="P:negative regulation of NF-kappaB transcription factor activity"/>
    <property type="evidence" value="ECO:0000314"/>
    <property type="project" value="UniProtKB"/>
</dbReference>
<dbReference type="GO" id="GO:0043123">
    <property type="term" value="P:positive regulation of canonical NF-kappaB signal transduction"/>
    <property type="evidence" value="ECO:0000314"/>
    <property type="project" value="UniProtKB"/>
</dbReference>
<dbReference type="GO" id="GO:2001238">
    <property type="term" value="P:positive regulation of extrinsic apoptotic signaling pathway"/>
    <property type="evidence" value="ECO:0007669"/>
    <property type="project" value="Ensembl"/>
</dbReference>
<dbReference type="GO" id="GO:0051092">
    <property type="term" value="P:positive regulation of NF-kappaB transcription factor activity"/>
    <property type="evidence" value="ECO:0000314"/>
    <property type="project" value="UniProtKB"/>
</dbReference>
<dbReference type="GO" id="GO:1901224">
    <property type="term" value="P:positive regulation of non-canonical NF-kappaB signal transduction"/>
    <property type="evidence" value="ECO:0007669"/>
    <property type="project" value="Ensembl"/>
</dbReference>
<dbReference type="GO" id="GO:0043161">
    <property type="term" value="P:proteasome-mediated ubiquitin-dependent protein catabolic process"/>
    <property type="evidence" value="ECO:0000315"/>
    <property type="project" value="UniProtKB"/>
</dbReference>
<dbReference type="GO" id="GO:0097039">
    <property type="term" value="P:protein linear polyubiquitination"/>
    <property type="evidence" value="ECO:0000314"/>
    <property type="project" value="UniProtKB"/>
</dbReference>
<dbReference type="GO" id="GO:0000209">
    <property type="term" value="P:protein polyubiquitination"/>
    <property type="evidence" value="ECO:0000314"/>
    <property type="project" value="UniProtKB"/>
</dbReference>
<dbReference type="GO" id="GO:0050852">
    <property type="term" value="P:T cell receptor signaling pathway"/>
    <property type="evidence" value="ECO:0000314"/>
    <property type="project" value="UniProtKB"/>
</dbReference>
<dbReference type="CDD" id="cd20345">
    <property type="entry name" value="BRcat_RBR_HOIL1"/>
    <property type="match status" value="1"/>
</dbReference>
<dbReference type="CDD" id="cd16633">
    <property type="entry name" value="mRING-HC-C3HC3D_RBR_HOIL1"/>
    <property type="match status" value="1"/>
</dbReference>
<dbReference type="CDD" id="cd20358">
    <property type="entry name" value="Rcat_RBR_HOIL1"/>
    <property type="match status" value="1"/>
</dbReference>
<dbReference type="CDD" id="cd01799">
    <property type="entry name" value="Ubl_HOIL1"/>
    <property type="match status" value="1"/>
</dbReference>
<dbReference type="FunFam" id="2.30.30.380:FF:000007">
    <property type="entry name" value="RanBP-type and C3HC4-type zinc finger-containing protein 1"/>
    <property type="match status" value="1"/>
</dbReference>
<dbReference type="FunFam" id="3.10.20.90:FF:000140">
    <property type="entry name" value="RanBP-type and C3HC4-type zinc finger-containing protein 1"/>
    <property type="match status" value="1"/>
</dbReference>
<dbReference type="FunFam" id="3.30.40.10:FF:000137">
    <property type="entry name" value="RanBP-type and C3HC4-type zinc finger-containing protein 1"/>
    <property type="match status" value="1"/>
</dbReference>
<dbReference type="FunFam" id="1.20.120.1750:FF:000012">
    <property type="entry name" value="ranBP-type and C3HC4-type zinc finger-containing protein 1 isoform X1"/>
    <property type="match status" value="1"/>
</dbReference>
<dbReference type="Gene3D" id="1.20.120.1750">
    <property type="match status" value="1"/>
</dbReference>
<dbReference type="Gene3D" id="3.10.20.90">
    <property type="entry name" value="Phosphatidylinositol 3-kinase Catalytic Subunit, Chain A, domain 1"/>
    <property type="match status" value="1"/>
</dbReference>
<dbReference type="Gene3D" id="3.30.40.10">
    <property type="entry name" value="Zinc/RING finger domain, C3HC4 (zinc finger)"/>
    <property type="match status" value="1"/>
</dbReference>
<dbReference type="Gene3D" id="2.30.30.380">
    <property type="entry name" value="Zn-finger domain of Sec23/24"/>
    <property type="match status" value="1"/>
</dbReference>
<dbReference type="InterPro" id="IPR047558">
    <property type="entry name" value="BRcat_RBR_HOIL1"/>
</dbReference>
<dbReference type="InterPro" id="IPR047559">
    <property type="entry name" value="HOIL1_RBR_mRING-HC-C3HC3D"/>
</dbReference>
<dbReference type="InterPro" id="IPR051628">
    <property type="entry name" value="LUBAC_E3_Ligases"/>
</dbReference>
<dbReference type="InterPro" id="IPR047557">
    <property type="entry name" value="Rcat_RBR_HOIL1"/>
</dbReference>
<dbReference type="InterPro" id="IPR044066">
    <property type="entry name" value="TRIAD_supradom"/>
</dbReference>
<dbReference type="InterPro" id="IPR000626">
    <property type="entry name" value="Ubiquitin-like_dom"/>
</dbReference>
<dbReference type="InterPro" id="IPR029071">
    <property type="entry name" value="Ubiquitin-like_domsf"/>
</dbReference>
<dbReference type="InterPro" id="IPR027370">
    <property type="entry name" value="Znf-RING_euk"/>
</dbReference>
<dbReference type="InterPro" id="IPR001876">
    <property type="entry name" value="Znf_RanBP2"/>
</dbReference>
<dbReference type="InterPro" id="IPR036443">
    <property type="entry name" value="Znf_RanBP2_sf"/>
</dbReference>
<dbReference type="InterPro" id="IPR001841">
    <property type="entry name" value="Znf_RING"/>
</dbReference>
<dbReference type="InterPro" id="IPR013083">
    <property type="entry name" value="Znf_RING/FYVE/PHD"/>
</dbReference>
<dbReference type="InterPro" id="IPR017907">
    <property type="entry name" value="Znf_RING_CS"/>
</dbReference>
<dbReference type="PANTHER" id="PTHR22770:SF35">
    <property type="entry name" value="RANBP-TYPE AND C3HC4-TYPE ZINC FINGER-CONTAINING PROTEIN 1"/>
    <property type="match status" value="1"/>
</dbReference>
<dbReference type="PANTHER" id="PTHR22770">
    <property type="entry name" value="UBIQUITIN CONJUGATING ENZYME 7 INTERACTING PROTEIN-RELATED"/>
    <property type="match status" value="1"/>
</dbReference>
<dbReference type="Pfam" id="PF25393">
    <property type="entry name" value="LTM"/>
    <property type="match status" value="1"/>
</dbReference>
<dbReference type="Pfam" id="PF13445">
    <property type="entry name" value="zf-RING_UBOX"/>
    <property type="match status" value="1"/>
</dbReference>
<dbReference type="SMART" id="SM00184">
    <property type="entry name" value="RING"/>
    <property type="match status" value="1"/>
</dbReference>
<dbReference type="SMART" id="SM00547">
    <property type="entry name" value="ZnF_RBZ"/>
    <property type="match status" value="1"/>
</dbReference>
<dbReference type="SUPFAM" id="SSF90209">
    <property type="entry name" value="Ran binding protein zinc finger-like"/>
    <property type="match status" value="1"/>
</dbReference>
<dbReference type="SUPFAM" id="SSF57850">
    <property type="entry name" value="RING/U-box"/>
    <property type="match status" value="3"/>
</dbReference>
<dbReference type="SUPFAM" id="SSF54236">
    <property type="entry name" value="Ubiquitin-like"/>
    <property type="match status" value="1"/>
</dbReference>
<dbReference type="PROSITE" id="PS51873">
    <property type="entry name" value="TRIAD"/>
    <property type="match status" value="1"/>
</dbReference>
<dbReference type="PROSITE" id="PS50053">
    <property type="entry name" value="UBIQUITIN_2"/>
    <property type="match status" value="1"/>
</dbReference>
<dbReference type="PROSITE" id="PS01358">
    <property type="entry name" value="ZF_RANBP2_1"/>
    <property type="match status" value="1"/>
</dbReference>
<dbReference type="PROSITE" id="PS50199">
    <property type="entry name" value="ZF_RANBP2_2"/>
    <property type="match status" value="1"/>
</dbReference>
<dbReference type="PROSITE" id="PS00518">
    <property type="entry name" value="ZF_RING_1"/>
    <property type="match status" value="1"/>
</dbReference>
<dbReference type="PROSITE" id="PS50089">
    <property type="entry name" value="ZF_RING_2"/>
    <property type="match status" value="1"/>
</dbReference>
<proteinExistence type="evidence at protein level"/>
<sequence>MDEKTKKAEEMALSLTRAVAGGDEQVAMKCAIWLAEQRVPLSVQLKPEVSPTQDIRLWVSVEDAQMHTVTIWLTVRPDMTVASLKDMVFLDYGFPPVLQQWVIGQRLARDQETLHSHGVRQNGDSAYLYLLSARNTSLNPQELQRERQLRMLEDLGFKDLTLQPRGPLEPGPPKPGVPQEPGRGQPDAVPEPPPVGWQCPGCTFINKPTRPGCEMCCRARPEAYQVPASYQPDEEERARLAGEEEALRQYQQRKQQQQEGNYLQHVQLDQRSLVLNTEPAECPVCYSVLAPGEAVVLRECLHTFCRECLQGTIRNSQEAEVSCPFIDNTYSCSGKLLEREIKALLTPEDYQRFLDLGISIAENRSAFSYHCKTPDCKGWCFFEDDVNEFTCPVCFHVNCLLCKAIHEQMNCKEYQEDLALRAQNDVAARQTTEMLKVMLQQGEAMRCPQCQIVVQKKDGCDWIRCTVCHTEICWVTKGPRWGPGGPGDTSGGCRCRVNGIPCHPSCQNCH</sequence>
<evidence type="ECO:0000250" key="1">
    <source>
        <dbReference type="UniProtKB" id="Q62921"/>
    </source>
</evidence>
<evidence type="ECO:0000250" key="2">
    <source>
        <dbReference type="UniProtKB" id="Q9WUB0"/>
    </source>
</evidence>
<evidence type="ECO:0000255" key="3"/>
<evidence type="ECO:0000255" key="4">
    <source>
        <dbReference type="PROSITE-ProRule" id="PRU00214"/>
    </source>
</evidence>
<evidence type="ECO:0000255" key="5">
    <source>
        <dbReference type="PROSITE-ProRule" id="PRU00322"/>
    </source>
</evidence>
<evidence type="ECO:0000255" key="6">
    <source>
        <dbReference type="PROSITE-ProRule" id="PRU01221"/>
    </source>
</evidence>
<evidence type="ECO:0000256" key="7">
    <source>
        <dbReference type="SAM" id="MobiDB-lite"/>
    </source>
</evidence>
<evidence type="ECO:0000269" key="8">
    <source>
    </source>
</evidence>
<evidence type="ECO:0000269" key="9">
    <source>
    </source>
</evidence>
<evidence type="ECO:0000269" key="10">
    <source>
    </source>
</evidence>
<evidence type="ECO:0000269" key="11">
    <source>
    </source>
</evidence>
<evidence type="ECO:0000269" key="12">
    <source>
    </source>
</evidence>
<evidence type="ECO:0000269" key="13">
    <source>
    </source>
</evidence>
<evidence type="ECO:0000269" key="14">
    <source>
    </source>
</evidence>
<evidence type="ECO:0000269" key="15">
    <source>
    </source>
</evidence>
<evidence type="ECO:0000269" key="16">
    <source>
    </source>
</evidence>
<evidence type="ECO:0000269" key="17">
    <source>
    </source>
</evidence>
<evidence type="ECO:0000269" key="18">
    <source>
    </source>
</evidence>
<evidence type="ECO:0000269" key="19">
    <source>
    </source>
</evidence>
<evidence type="ECO:0000269" key="20">
    <source>
    </source>
</evidence>
<evidence type="ECO:0000269" key="21">
    <source>
    </source>
</evidence>
<evidence type="ECO:0000269" key="22">
    <source>
    </source>
</evidence>
<evidence type="ECO:0000269" key="23">
    <source>
    </source>
</evidence>
<evidence type="ECO:0000303" key="24">
    <source>
    </source>
</evidence>
<evidence type="ECO:0000303" key="25">
    <source>
    </source>
</evidence>
<evidence type="ECO:0000303" key="26">
    <source>
    </source>
</evidence>
<evidence type="ECO:0000303" key="27">
    <source>
    </source>
</evidence>
<evidence type="ECO:0000305" key="28"/>
<evidence type="ECO:0000305" key="29">
    <source>
    </source>
</evidence>
<evidence type="ECO:0007744" key="30">
    <source>
    </source>
</evidence>
<evidence type="ECO:0007744" key="31">
    <source>
    </source>
</evidence>
<evidence type="ECO:0007744" key="32">
    <source>
    </source>
</evidence>
<evidence type="ECO:0007829" key="33">
    <source>
        <dbReference type="PDB" id="7V8E"/>
    </source>
</evidence>
<evidence type="ECO:0007829" key="34">
    <source>
        <dbReference type="PDB" id="7YUI"/>
    </source>
</evidence>
<evidence type="ECO:0007829" key="35">
    <source>
        <dbReference type="PDB" id="7YUJ"/>
    </source>
</evidence>
<evidence type="ECO:0007829" key="36">
    <source>
        <dbReference type="PDB" id="8BVL"/>
    </source>
</evidence>
<evidence type="ECO:0007829" key="37">
    <source>
        <dbReference type="PDB" id="8EAZ"/>
    </source>
</evidence>
<keyword id="KW-0002">3D-structure</keyword>
<keyword id="KW-0007">Acetylation</keyword>
<keyword id="KW-0025">Alternative splicing</keyword>
<keyword id="KW-0175">Coiled coil</keyword>
<keyword id="KW-0225">Disease variant</keyword>
<keyword id="KW-0945">Host-virus interaction</keyword>
<keyword id="KW-0479">Metal-binding</keyword>
<keyword id="KW-0597">Phosphoprotein</keyword>
<keyword id="KW-1267">Proteomics identification</keyword>
<keyword id="KW-1185">Reference proteome</keyword>
<keyword id="KW-0677">Repeat</keyword>
<keyword id="KW-0808">Transferase</keyword>
<keyword id="KW-0832">Ubl conjugation</keyword>
<keyword id="KW-0833">Ubl conjugation pathway</keyword>
<keyword id="KW-0862">Zinc</keyword>
<keyword id="KW-0863">Zinc-finger</keyword>
<gene>
    <name type="primary">RBCK1</name>
    <name type="synonym">C20orf18</name>
    <name type="synonym">RNF54</name>
    <name type="synonym">UBCE7IP3</name>
    <name evidence="24" type="synonym">XAP3</name>
    <name type="synonym">XAP4</name>
</gene>
<feature type="chain" id="PRO_0000056295" description="RanBP-type and C3HC4-type zinc finger-containing protein 1">
    <location>
        <begin position="1"/>
        <end position="510"/>
    </location>
</feature>
<feature type="domain" description="Ubiquitin-like" evidence="4">
    <location>
        <begin position="55"/>
        <end position="119"/>
    </location>
</feature>
<feature type="zinc finger region" description="RanBP2-type" evidence="5">
    <location>
        <begin position="193"/>
        <end position="222"/>
    </location>
</feature>
<feature type="zinc finger region" description="RING-type 1" evidence="6">
    <location>
        <begin position="282"/>
        <end position="332"/>
    </location>
</feature>
<feature type="zinc finger region" description="IBR-type" evidence="6">
    <location>
        <begin position="351"/>
        <end position="411"/>
    </location>
</feature>
<feature type="zinc finger region" description="RING-type 2; atypical" evidence="6">
    <location>
        <begin position="447"/>
        <end position="476"/>
    </location>
</feature>
<feature type="region of interest" description="Interaction with TAB2" evidence="10">
    <location>
        <begin position="1"/>
        <end position="270"/>
    </location>
</feature>
<feature type="region of interest" description="Interaction with IRF3" evidence="11">
    <location>
        <begin position="1"/>
        <end position="220"/>
    </location>
</feature>
<feature type="region of interest" description="Interaction with RNF31" evidence="17">
    <location>
        <begin position="69"/>
        <end position="131"/>
    </location>
</feature>
<feature type="region of interest" description="Disordered" evidence="7">
    <location>
        <begin position="160"/>
        <end position="192"/>
    </location>
</feature>
<feature type="region of interest" description="TRIAD supradomain" evidence="6">
    <location>
        <begin position="278"/>
        <end position="506"/>
    </location>
</feature>
<feature type="coiled-coil region" evidence="3">
    <location>
        <begin position="233"/>
        <end position="261"/>
    </location>
</feature>
<feature type="compositionally biased region" description="Pro residues" evidence="7">
    <location>
        <begin position="167"/>
        <end position="178"/>
    </location>
</feature>
<feature type="active site" evidence="6">
    <location>
        <position position="460"/>
    </location>
</feature>
<feature type="binding site" evidence="6">
    <location>
        <position position="282"/>
    </location>
    <ligand>
        <name>Zn(2+)</name>
        <dbReference type="ChEBI" id="CHEBI:29105"/>
        <label>1</label>
    </ligand>
</feature>
<feature type="binding site" evidence="6">
    <location>
        <position position="285"/>
    </location>
    <ligand>
        <name>Zn(2+)</name>
        <dbReference type="ChEBI" id="CHEBI:29105"/>
        <label>1</label>
    </ligand>
</feature>
<feature type="binding site" evidence="6">
    <location>
        <position position="300"/>
    </location>
    <ligand>
        <name>Zn(2+)</name>
        <dbReference type="ChEBI" id="CHEBI:29105"/>
        <label>2</label>
    </ligand>
</feature>
<feature type="binding site" evidence="6">
    <location>
        <position position="302"/>
    </location>
    <ligand>
        <name>Zn(2+)</name>
        <dbReference type="ChEBI" id="CHEBI:29105"/>
        <label>2</label>
    </ligand>
</feature>
<feature type="binding site" evidence="6">
    <location>
        <position position="305"/>
    </location>
    <ligand>
        <name>Zn(2+)</name>
        <dbReference type="ChEBI" id="CHEBI:29105"/>
        <label>1</label>
    </ligand>
</feature>
<feature type="binding site" evidence="6">
    <location>
        <position position="308"/>
    </location>
    <ligand>
        <name>Zn(2+)</name>
        <dbReference type="ChEBI" id="CHEBI:29105"/>
        <label>1</label>
    </ligand>
</feature>
<feature type="binding site" evidence="6">
    <location>
        <position position="323"/>
    </location>
    <ligand>
        <name>Zn(2+)</name>
        <dbReference type="ChEBI" id="CHEBI:29105"/>
        <label>2</label>
    </ligand>
</feature>
<feature type="binding site" evidence="6">
    <location>
        <position position="332"/>
    </location>
    <ligand>
        <name>Zn(2+)</name>
        <dbReference type="ChEBI" id="CHEBI:29105"/>
        <label>2</label>
    </ligand>
</feature>
<feature type="binding site" evidence="6">
    <location>
        <position position="371"/>
    </location>
    <ligand>
        <name>Zn(2+)</name>
        <dbReference type="ChEBI" id="CHEBI:29105"/>
        <label>3</label>
    </ligand>
</feature>
<feature type="binding site" evidence="6">
    <location>
        <position position="376"/>
    </location>
    <ligand>
        <name>Zn(2+)</name>
        <dbReference type="ChEBI" id="CHEBI:29105"/>
        <label>3</label>
    </ligand>
</feature>
<feature type="binding site" evidence="6">
    <location>
        <position position="391"/>
    </location>
    <ligand>
        <name>Zn(2+)</name>
        <dbReference type="ChEBI" id="CHEBI:29105"/>
        <label>3</label>
    </ligand>
</feature>
<feature type="binding site" evidence="6">
    <location>
        <position position="394"/>
    </location>
    <ligand>
        <name>Zn(2+)</name>
        <dbReference type="ChEBI" id="CHEBI:29105"/>
        <label>3</label>
    </ligand>
</feature>
<feature type="binding site" evidence="6">
    <location>
        <position position="399"/>
    </location>
    <ligand>
        <name>Zn(2+)</name>
        <dbReference type="ChEBI" id="CHEBI:29105"/>
        <label>4</label>
    </ligand>
</feature>
<feature type="binding site" evidence="6">
    <location>
        <position position="402"/>
    </location>
    <ligand>
        <name>Zn(2+)</name>
        <dbReference type="ChEBI" id="CHEBI:29105"/>
        <label>4</label>
    </ligand>
</feature>
<feature type="binding site" evidence="6">
    <location>
        <position position="406"/>
    </location>
    <ligand>
        <name>Zn(2+)</name>
        <dbReference type="ChEBI" id="CHEBI:29105"/>
        <label>4</label>
    </ligand>
</feature>
<feature type="binding site" evidence="6">
    <location>
        <position position="411"/>
    </location>
    <ligand>
        <name>Zn(2+)</name>
        <dbReference type="ChEBI" id="CHEBI:29105"/>
        <label>4</label>
    </ligand>
</feature>
<feature type="binding site" evidence="6">
    <location>
        <position position="447"/>
    </location>
    <ligand>
        <name>Zn(2+)</name>
        <dbReference type="ChEBI" id="CHEBI:29105"/>
        <label>5</label>
    </ligand>
</feature>
<feature type="binding site" evidence="6">
    <location>
        <position position="450"/>
    </location>
    <ligand>
        <name>Zn(2+)</name>
        <dbReference type="ChEBI" id="CHEBI:29105"/>
        <label>5</label>
    </ligand>
</feature>
<feature type="binding site" evidence="6">
    <location>
        <position position="465"/>
    </location>
    <ligand>
        <name>Zn(2+)</name>
        <dbReference type="ChEBI" id="CHEBI:29105"/>
        <label>5</label>
    </ligand>
</feature>
<feature type="binding site" evidence="6">
    <location>
        <position position="468"/>
    </location>
    <ligand>
        <name>Zn(2+)</name>
        <dbReference type="ChEBI" id="CHEBI:29105"/>
        <label>5</label>
    </ligand>
</feature>
<feature type="modified residue" description="N-acetylmethionine" evidence="31">
    <location>
        <position position="1"/>
    </location>
</feature>
<feature type="modified residue" description="Phosphoserine" evidence="32">
    <location>
        <position position="50"/>
    </location>
</feature>
<feature type="modified residue" description="Phosphotyrosine" evidence="30">
    <location>
        <position position="330"/>
    </location>
</feature>
<feature type="splice variant" id="VSP_005766" description="In isoform 2 and isoform 3." evidence="25 26 27">
    <original>MDEKTKKAEEMALSLTRAVAGGDEQVAMKCAIWLAEQRVPLSVQLKPEVSPTQDI</original>
    <variation>MGTATPDGREDQE</variation>
    <location>
        <begin position="1"/>
        <end position="55"/>
    </location>
</feature>
<feature type="splice variant" id="VSP_005767" description="In isoform 3." evidence="26">
    <original>RKQQQQEGNYLQHVQLDQRS</original>
    <variation>GVPAGHHPQQPGGGGLLPLH</variation>
    <location>
        <begin position="253"/>
        <end position="272"/>
    </location>
</feature>
<feature type="splice variant" id="VSP_005768" description="In isoform 3." evidence="26">
    <location>
        <begin position="273"/>
        <end position="510"/>
    </location>
</feature>
<feature type="sequence variant" id="VAR_071385" description="In PGBM1." evidence="20">
    <original>A</original>
    <variation>P</variation>
    <location>
        <position position="18"/>
    </location>
</feature>
<feature type="sequence variant" id="VAR_071386" description="In PGBM1; dbSNP:rs566912235." evidence="20">
    <original>N</original>
    <variation>S</variation>
    <location>
        <position position="387"/>
    </location>
</feature>
<feature type="mutagenesis site" description="Binds to IREB2 in iron-treated cells. Reversed iron-induced down-regulation of IREB2. No ubiquitination of heme-loaded IREB2; when associated with S-285." evidence="8">
    <original>C</original>
    <variation>S</variation>
    <location>
        <position position="282"/>
    </location>
</feature>
<feature type="mutagenesis site" description="Binds to IREB2 in iron-treated cells. Reversed iron-induced down-regulation of IREB2. No ubiquitination of heme-loaded IREB2; when associated with S-282." evidence="8">
    <original>C</original>
    <variation>S</variation>
    <location>
        <position position="285"/>
    </location>
</feature>
<feature type="sequence conflict" description="In Ref. 2; BAC75409." evidence="28" ref="2">
    <original>E</original>
    <variation>D</variation>
    <location>
        <position position="236"/>
    </location>
</feature>
<feature type="strand" evidence="33">
    <location>
        <begin position="55"/>
        <end position="62"/>
    </location>
</feature>
<feature type="strand" evidence="33">
    <location>
        <begin position="64"/>
        <end position="66"/>
    </location>
</feature>
<feature type="strand" evidence="33">
    <location>
        <begin position="68"/>
        <end position="75"/>
    </location>
</feature>
<feature type="helix" evidence="33">
    <location>
        <begin position="81"/>
        <end position="92"/>
    </location>
</feature>
<feature type="helix" evidence="33">
    <location>
        <begin position="96"/>
        <end position="98"/>
    </location>
</feature>
<feature type="strand" evidence="33">
    <location>
        <begin position="99"/>
        <end position="102"/>
    </location>
</feature>
<feature type="strand" evidence="33">
    <location>
        <begin position="104"/>
        <end position="107"/>
    </location>
</feature>
<feature type="helix" evidence="33">
    <location>
        <begin position="115"/>
        <end position="117"/>
    </location>
</feature>
<feature type="strand" evidence="33">
    <location>
        <begin position="124"/>
        <end position="130"/>
    </location>
</feature>
<feature type="strand" evidence="34">
    <location>
        <begin position="195"/>
        <end position="198"/>
    </location>
</feature>
<feature type="turn" evidence="34">
    <location>
        <begin position="200"/>
        <end position="202"/>
    </location>
</feature>
<feature type="turn" evidence="34">
    <location>
        <begin position="214"/>
        <end position="216"/>
    </location>
</feature>
<feature type="helix" evidence="34">
    <location>
        <begin position="234"/>
        <end position="267"/>
    </location>
</feature>
<feature type="helix" evidence="34">
    <location>
        <begin position="268"/>
        <end position="270"/>
    </location>
</feature>
<feature type="strand" evidence="34">
    <location>
        <begin position="271"/>
        <end position="275"/>
    </location>
</feature>
<feature type="turn" evidence="34">
    <location>
        <begin position="283"/>
        <end position="285"/>
    </location>
</feature>
<feature type="strand" evidence="34">
    <location>
        <begin position="293"/>
        <end position="296"/>
    </location>
</feature>
<feature type="turn" evidence="34">
    <location>
        <begin position="298"/>
        <end position="300"/>
    </location>
</feature>
<feature type="helix" evidence="34">
    <location>
        <begin position="306"/>
        <end position="314"/>
    </location>
</feature>
<feature type="strand" evidence="34">
    <location>
        <begin position="317"/>
        <end position="320"/>
    </location>
</feature>
<feature type="helix" evidence="34">
    <location>
        <begin position="338"/>
        <end position="344"/>
    </location>
</feature>
<feature type="helix" evidence="34">
    <location>
        <begin position="347"/>
        <end position="364"/>
    </location>
</feature>
<feature type="strand" evidence="35">
    <location>
        <begin position="368"/>
        <end position="370"/>
    </location>
</feature>
<feature type="strand" evidence="35">
    <location>
        <begin position="379"/>
        <end position="381"/>
    </location>
</feature>
<feature type="strand" evidence="35">
    <location>
        <begin position="388"/>
        <end position="390"/>
    </location>
</feature>
<feature type="turn" evidence="35">
    <location>
        <begin position="392"/>
        <end position="394"/>
    </location>
</feature>
<feature type="strand" evidence="35">
    <location>
        <begin position="397"/>
        <end position="399"/>
    </location>
</feature>
<feature type="turn" evidence="35">
    <location>
        <begin position="400"/>
        <end position="403"/>
    </location>
</feature>
<feature type="helix" evidence="35">
    <location>
        <begin position="411"/>
        <end position="421"/>
    </location>
</feature>
<feature type="helix" evidence="35">
    <location>
        <begin position="426"/>
        <end position="440"/>
    </location>
</feature>
<feature type="strand" evidence="35">
    <location>
        <begin position="443"/>
        <end position="446"/>
    </location>
</feature>
<feature type="turn" evidence="35">
    <location>
        <begin position="448"/>
        <end position="450"/>
    </location>
</feature>
<feature type="strand" evidence="36">
    <location>
        <begin position="453"/>
        <end position="455"/>
    </location>
</feature>
<feature type="strand" evidence="35">
    <location>
        <begin position="461"/>
        <end position="464"/>
    </location>
</feature>
<feature type="turn" evidence="35">
    <location>
        <begin position="466"/>
        <end position="468"/>
    </location>
</feature>
<feature type="strand" evidence="35">
    <location>
        <begin position="471"/>
        <end position="473"/>
    </location>
</feature>
<feature type="turn" evidence="35">
    <location>
        <begin position="474"/>
        <end position="477"/>
    </location>
</feature>
<feature type="strand" evidence="35">
    <location>
        <begin position="478"/>
        <end position="481"/>
    </location>
</feature>
<feature type="strand" evidence="37">
    <location>
        <begin position="490"/>
        <end position="492"/>
    </location>
</feature>
<feature type="helix" evidence="35">
    <location>
        <begin position="497"/>
        <end position="499"/>
    </location>
</feature>
<accession>Q9BYM8</accession>
<accession>O95623</accession>
<accession>Q86SL2</accession>
<accession>Q96BS3</accession>
<accession>Q9BYM9</accession>
<comment type="function">
    <text evidence="8 9 10 11 12 13 14 15 16 19 21">E3 ubiquitin-protein ligase, which accepts ubiquitin from specific E2 ubiquitin-conjugating enzymes, such as UBE2L3/UBCM4, and then transfers it to substrates (PubMed:12629548, PubMed:17449468, PubMed:18711448). Functions as an E3 ligase for oxidized IREB2 and both heme and oxygen are necessary for IREB2 ubiquitination (PubMed:12629548). Promotes ubiquitination of TAB2 and IRF3 and their degradation by the proteasome (PubMed:17449468, PubMed:18711448). Component of the LUBAC complex which conjugates linear ('Met-1'-linked) polyubiquitin chains to substrates and plays a key role in NF-kappa-B activation and regulation of inflammation (PubMed:17006537, PubMed:19136968, PubMed:21455173, PubMed:21455180, PubMed:21455181). LUBAC conjugates linear polyubiquitin to IKBKG and RIPK1 and is involved in activation of the canonical NF-kappa-B and the JNK signaling pathways (PubMed:17006537, PubMed:19136968, PubMed:21455173, PubMed:21455180, PubMed:21455181). Linear ubiquitination mediated by the LUBAC complex interferes with TNF-induced cell death and thereby prevents inflammation (PubMed:17006537, PubMed:21455173, PubMed:21455180, PubMed:21455181). LUBAC is recruited to the TNF-R1 signaling complex (TNF-RSC) following polyubiquitination of TNF-RSC components by BIRC2 and/or BIRC3 and to conjugate linear polyubiquitin to IKBKG and possibly other components contributing to the stability of the complex (PubMed:17006537, PubMed:19136968, PubMed:21455173, PubMed:21455180, PubMed:21455181). The LUBAC complex is also involved in innate immunity by conjugating linear polyubiquitin chains at the surface of bacteria invading the cytosol to form the ubiquitin coat surrounding bacteria (PubMed:28481331). LUBAC is not able to initiate formation of the bacterial ubiquitin coat, and can only promote formation of linear polyubiquitins on pre-existing ubiquitin (PubMed:28481331). The bacterial ubiquitin coat acts as an 'eat-me' signal for xenophagy and promotes NF-kappa-B activation (PubMed:28481331). Together with OTULIN, the LUBAC complex regulates the canonical Wnt signaling during angiogenesis (PubMed:23708998). Binds polyubiquitin of different linkage types (PubMed:20005846, PubMed:21455181).</text>
</comment>
<comment type="catalytic activity">
    <reaction evidence="8">
        <text>[E2 ubiquitin-conjugating enzyme]-S-ubiquitinyl-L-cysteine + [acceptor protein]-L-lysine = [E2 ubiquitin-conjugating enzyme]-L-cysteine + [acceptor protein]-N(6)-ubiquitinyl-L-lysine.</text>
        <dbReference type="EC" id="2.3.2.31"/>
    </reaction>
</comment>
<comment type="pathway">
    <text evidence="8 21">Protein modification; protein ubiquitination.</text>
</comment>
<comment type="subunit">
    <text evidence="1 2 9 10 11 13 14 15 16 17 21 23">Component of the LUBAC complex (linear ubiquitin chain assembly complex) which consists of SHARPIN, RBCK1 and RNF31 (PubMed:17006537, PubMed:21455173, PubMed:21455180, PubMed:21455181, PubMed:22430200, PubMed:28481331). LUBAC has a MW of approximately 600 kDa suggesting a heteromultimeric assembly of its subunits (PubMed:17006537, PubMed:21455173, PubMed:21455180, PubMed:21455181). Interacts with beta-I-type (PRKCB1) and zeta-type protein kinase C (PRKCZ) (By similarity). Interacts with UBE2L3 (By similarity). Interacts with PRKCH (PubMed:9195957). Associates with the TNF-R1 signaling complex (TNF-RSC) in a stimulation-dependent manner (PubMed:20005846). Interacts with EYA1, TAB2, TAB3, MAP3K7 TRAF6 and RIPK1 (PubMed:17449468). Interacts with IRF3 (PubMed:18711448).</text>
</comment>
<comment type="subunit">
    <molecule>Isoform 1</molecule>
    <text evidence="8">Interacts with IREB2 only in iron-rich conditions.</text>
</comment>
<comment type="subunit">
    <molecule>Isoform 2</molecule>
    <text evidence="8">Interacts with IREB2 only in iron-rich conditions.</text>
</comment>
<comment type="subunit">
    <text evidence="23">(Microbial infection) Interacts with hepatitis B virus/HBV protein HBx; this interaction is required to activate transcription of the viral genome.</text>
</comment>
<comment type="interaction">
    <interactant intactId="EBI-2340624">
        <id>Q9BYM8</id>
    </interactant>
    <interactant intactId="EBI-930964">
        <id>P54253</id>
        <label>ATXN1</label>
    </interactant>
    <organismsDiffer>false</organismsDiffer>
    <experiments>6</experiments>
</comment>
<comment type="interaction">
    <interactant intactId="EBI-2340624">
        <id>Q9BYM8</id>
    </interactant>
    <interactant intactId="EBI-10192698">
        <id>Q02930-3</id>
        <label>CREB5</label>
    </interactant>
    <organismsDiffer>false</organismsDiffer>
    <experiments>3</experiments>
</comment>
<comment type="interaction">
    <interactant intactId="EBI-2340624">
        <id>Q9BYM8</id>
    </interactant>
    <interactant intactId="EBI-744099">
        <id>Q9H0I2</id>
        <label>ENKD1</label>
    </interactant>
    <organismsDiffer>false</organismsDiffer>
    <experiments>3</experiments>
</comment>
<comment type="interaction">
    <interactant intactId="EBI-2340624">
        <id>Q9BYM8</id>
    </interactant>
    <interactant intactId="EBI-748515">
        <id>Q8IVS8</id>
        <label>GLYCTK</label>
    </interactant>
    <organismsDiffer>false</organismsDiffer>
    <experiments>3</experiments>
</comment>
<comment type="interaction">
    <interactant intactId="EBI-2340624">
        <id>Q9BYM8</id>
    </interactant>
    <interactant intactId="EBI-16429135">
        <id>A0A0S2Z4Q4</id>
        <label>HGS</label>
    </interactant>
    <organismsDiffer>false</organismsDiffer>
    <experiments>3</experiments>
</comment>
<comment type="interaction">
    <interactant intactId="EBI-2340624">
        <id>Q9BYM8</id>
    </interactant>
    <interactant intactId="EBI-1752118">
        <id>P31273</id>
        <label>HOXC8</label>
    </interactant>
    <organismsDiffer>false</organismsDiffer>
    <experiments>3</experiments>
</comment>
<comment type="interaction">
    <interactant intactId="EBI-2340624">
        <id>Q9BYM8</id>
    </interactant>
    <interactant intactId="EBI-81279">
        <id>Q9Y6K9</id>
        <label>IKBKG</label>
    </interactant>
    <organismsDiffer>false</organismsDiffer>
    <experiments>9</experiments>
</comment>
<comment type="interaction">
    <interactant intactId="EBI-2340624">
        <id>Q9BYM8</id>
    </interactant>
    <interactant intactId="EBI-17178971">
        <id>Q14005-2</id>
        <label>IL16</label>
    </interactant>
    <organismsDiffer>false</organismsDiffer>
    <experiments>3</experiments>
</comment>
<comment type="interaction">
    <interactant intactId="EBI-2340624">
        <id>Q9BYM8</id>
    </interactant>
    <interactant intactId="EBI-2556193">
        <id>Q63ZY3</id>
        <label>KANK2</label>
    </interactant>
    <organismsDiffer>false</organismsDiffer>
    <experiments>3</experiments>
</comment>
<comment type="interaction">
    <interactant intactId="EBI-2340624">
        <id>Q9BYM8</id>
    </interactant>
    <interactant intactId="EBI-739832">
        <id>Q8TBB1</id>
        <label>LNX1</label>
    </interactant>
    <organismsDiffer>false</organismsDiffer>
    <experiments>3</experiments>
</comment>
<comment type="interaction">
    <interactant intactId="EBI-2340624">
        <id>Q9BYM8</id>
    </interactant>
    <interactant intactId="EBI-947402">
        <id>O60336</id>
        <label>MAPKBP1</label>
    </interactant>
    <organismsDiffer>false</organismsDiffer>
    <experiments>3</experiments>
</comment>
<comment type="interaction">
    <interactant intactId="EBI-2340624">
        <id>Q9BYM8</id>
    </interactant>
    <interactant intactId="EBI-747693">
        <id>P41227</id>
        <label>NAA10</label>
    </interactant>
    <organismsDiffer>false</organismsDiffer>
    <experiments>3</experiments>
</comment>
<comment type="interaction">
    <interactant intactId="EBI-2340624">
        <id>Q9BYM8</id>
    </interactant>
    <interactant intactId="EBI-2114801">
        <id>Q9BU61</id>
        <label>NDUFAF3</label>
    </interactant>
    <organismsDiffer>false</organismsDiffer>
    <experiments>3</experiments>
</comment>
<comment type="interaction">
    <interactant intactId="EBI-2340624">
        <id>Q9BYM8</id>
    </interactant>
    <interactant intactId="EBI-10298649">
        <id>Q9BU61-2</id>
        <label>NDUFAF3</label>
    </interactant>
    <organismsDiffer>false</organismsDiffer>
    <experiments>3</experiments>
</comment>
<comment type="interaction">
    <interactant intactId="EBI-2340624">
        <id>Q9BYM8</id>
    </interactant>
    <interactant intactId="EBI-359352">
        <id>P25786</id>
        <label>PSMA1</label>
    </interactant>
    <organismsDiffer>false</organismsDiffer>
    <experiments>3</experiments>
</comment>
<comment type="interaction">
    <interactant intactId="EBI-2340624">
        <id>Q9BYM8</id>
    </interactant>
    <interactant intactId="EBI-2340624">
        <id>Q9BYM8</id>
        <label>RBCK1</label>
    </interactant>
    <organismsDiffer>false</organismsDiffer>
    <experiments>3</experiments>
</comment>
<comment type="interaction">
    <interactant intactId="EBI-2340624">
        <id>Q9BYM8</id>
    </interactant>
    <interactant intactId="EBI-948111">
        <id>Q96EP0</id>
        <label>RNF31</label>
    </interactant>
    <organismsDiffer>false</organismsDiffer>
    <experiments>50</experiments>
</comment>
<comment type="interaction">
    <interactant intactId="EBI-2340624">
        <id>Q9BYM8</id>
    </interactant>
    <interactant intactId="EBI-3942966">
        <id>Q9H0F6</id>
        <label>SHARPIN</label>
    </interactant>
    <organismsDiffer>false</organismsDiffer>
    <experiments>28</experiments>
</comment>
<comment type="interaction">
    <interactant intactId="EBI-2340624">
        <id>Q9BYM8</id>
    </interactant>
    <interactant intactId="EBI-6872807">
        <id>Q8N0S2</id>
        <label>SYCE1</label>
    </interactant>
    <organismsDiffer>false</organismsDiffer>
    <experiments>3</experiments>
</comment>
<comment type="interaction">
    <interactant intactId="EBI-2340624">
        <id>Q9BYM8</id>
    </interactant>
    <interactant intactId="EBI-372899">
        <id>Q13148</id>
        <label>TARDBP</label>
    </interactant>
    <organismsDiffer>false</organismsDiffer>
    <experiments>3</experiments>
</comment>
<comment type="interaction">
    <interactant intactId="EBI-2340624">
        <id>Q9BYM8</id>
    </interactant>
    <interactant intactId="EBI-3918381">
        <id>Q96PN8</id>
        <label>TSSK3</label>
    </interactant>
    <organismsDiffer>false</organismsDiffer>
    <experiments>6</experiments>
</comment>
<comment type="interaction">
    <interactant intactId="EBI-2340624">
        <id>Q9BYM8</id>
    </interactant>
    <interactant intactId="EBI-9090990">
        <id>Q5W5X9-3</id>
        <label>TTC23</label>
    </interactant>
    <organismsDiffer>false</organismsDiffer>
    <experiments>3</experiments>
</comment>
<comment type="interaction">
    <interactant intactId="EBI-2340624">
        <id>Q9BYM8</id>
    </interactant>
    <interactant intactId="EBI-473850">
        <id>P61086</id>
        <label>UBE2K</label>
    </interactant>
    <organismsDiffer>false</organismsDiffer>
    <experiments>3</experiments>
</comment>
<comment type="interaction">
    <interactant intactId="EBI-2340624">
        <id>Q9BYM8</id>
    </interactant>
    <interactant intactId="EBI-711173">
        <id>P68036</id>
        <label>UBE2L3</label>
    </interactant>
    <organismsDiffer>false</organismsDiffer>
    <experiments>4</experiments>
</comment>
<comment type="interaction">
    <interactant intactId="EBI-2340624">
        <id>Q9BYM8</id>
    </interactant>
    <interactant intactId="EBI-2129974">
        <id>O14933</id>
        <label>UBE2L6</label>
    </interactant>
    <organismsDiffer>false</organismsDiffer>
    <experiments>7</experiments>
</comment>
<comment type="interaction">
    <interactant intactId="EBI-2340624">
        <id>Q9BYM8</id>
    </interactant>
    <interactant intactId="EBI-1052908">
        <id>P61088</id>
        <label>UBE2N</label>
    </interactant>
    <organismsDiffer>false</organismsDiffer>
    <experiments>2</experiments>
</comment>
<comment type="interaction">
    <interactant intactId="EBI-2340624">
        <id>Q9BYM8</id>
    </interactant>
    <interactant intactId="EBI-744257">
        <id>Q96IQ9</id>
        <label>ZNF414</label>
    </interactant>
    <organismsDiffer>false</organismsDiffer>
    <experiments>3</experiments>
</comment>
<comment type="interaction">
    <interactant intactId="EBI-2340624">
        <id>Q9BYM8</id>
    </interactant>
    <interactant intactId="EBI-3957603">
        <id>P09022</id>
        <label>Hoxa1</label>
    </interactant>
    <organismsDiffer>true</organismsDiffer>
    <experiments>3</experiments>
</comment>
<comment type="interaction">
    <interactant intactId="EBI-2340624">
        <id>Q9BYM8</id>
    </interactant>
    <interactant intactId="EBI-8500205">
        <id>Q9JLY0</id>
        <label>Socs6</label>
    </interactant>
    <organismsDiffer>true</organismsDiffer>
    <experiments>5</experiments>
</comment>
<comment type="interaction">
    <interactant intactId="EBI-2340624">
        <id>Q9BYM8</id>
    </interactant>
    <interactant intactId="EBI-6116765">
        <id>Q4VA12</id>
        <label>Traf1</label>
    </interactant>
    <organismsDiffer>true</organismsDiffer>
    <experiments>2</experiments>
</comment>
<comment type="interaction">
    <interactant intactId="EBI-25867896">
        <id>Q9BYM8-4</id>
    </interactant>
    <interactant intactId="EBI-473850">
        <id>P61086</id>
        <label>UBE2K</label>
    </interactant>
    <organismsDiffer>false</organismsDiffer>
    <experiments>3</experiments>
</comment>
<comment type="alternative products">
    <event type="alternative splicing"/>
    <isoform>
        <id>Q9BYM8-1</id>
        <name>1</name>
        <name>HOIL-1L</name>
        <sequence type="displayed"/>
    </isoform>
    <isoform>
        <id>Q9BYM8-3</id>
        <name>2</name>
        <sequence type="described" ref="VSP_005766"/>
    </isoform>
    <isoform>
        <id>Q9BYM8-4</id>
        <name>3</name>
        <sequence type="described" ref="VSP_005766 VSP_005767 VSP_005768"/>
    </isoform>
    <text>Experimental confirmation may be lacking for some isoforms.</text>
</comment>
<comment type="induction">
    <text evidence="11">By viral transfection.</text>
</comment>
<comment type="domain">
    <text evidence="2">The RanBP2-type zinc finger, also called Npl4 zinc finger (NZF), mediates binding to 'Met-1'-linked polyubiquitins.</text>
</comment>
<comment type="domain">
    <text evidence="16">The UBL domain mediates association with RNF31 via interaction with its UBA domain.</text>
</comment>
<comment type="PTM">
    <text evidence="1">Auto-ubiquitinated. Auto-ubiquitination leads to degradation by the proteasome (By similarity).</text>
</comment>
<comment type="PTM">
    <text evidence="1">Phosphorylated. In vitro, phosphorylation inhibits auto-ubiquitination activity (By similarity).</text>
</comment>
<comment type="PTM">
    <text evidence="22 29">(Microbial infection) Ubiquitinated by S.flexneri E3 ubiquitin-protein ligases IpaH1.4 and IpaH2.5, leading to its degradation by the proteasome, thereby preventing formation of the bacterial ubiquitin coat and activation of innate immunity (PubMed:27572974, PubMed:35294289).</text>
</comment>
<comment type="disease" evidence="18 20">
    <disease id="DI-04157">
        <name>Polyglucosan body myopathy 1 with or without immunodeficiency</name>
        <acronym>PGBM1</acronym>
        <description>A disease characterized by polyglucosan storage myopathy associated with early-onset progressive muscle weakness and progressive dilated cardiomyopathy, which may necessitate cardiac transplant in severe cases. Some patients present with severe immunodeficiency, invasive bacterial infections and chronic autoinflammation.</description>
        <dbReference type="MIM" id="615895"/>
    </disease>
    <text>The disease is caused by variants affecting the gene represented in this entry.</text>
</comment>
<comment type="miscellaneous">
    <molecule>Isoform 3</molecule>
    <text evidence="28">May be produced at very low levels due to a premature stop codon in the mRNA, leading to nonsense-mediated mRNA decay.</text>
</comment>
<comment type="similarity">
    <text evidence="28">Belongs to the RBR family.</text>
</comment>
<comment type="sequence caution" evidence="28">
    <conflict type="erroneous initiation">
        <sequence resource="EMBL-CDS" id="AAH15219"/>
    </conflict>
    <text>Truncated N-terminus.</text>
</comment>
<name>HOIL1_HUMAN</name>